<keyword id="KW-0067">ATP-binding</keyword>
<keyword id="KW-0342">GTP-binding</keyword>
<keyword id="KW-0547">Nucleotide-binding</keyword>
<name>Y445_VIBVY</name>
<proteinExistence type="inferred from homology"/>
<gene>
    <name type="ordered locus">VV0445</name>
</gene>
<reference key="1">
    <citation type="journal article" date="2003" name="Genome Res.">
        <title>Comparative genome analysis of Vibrio vulnificus, a marine pathogen.</title>
        <authorList>
            <person name="Chen C.-Y."/>
            <person name="Wu K.-M."/>
            <person name="Chang Y.-C."/>
            <person name="Chang C.-H."/>
            <person name="Tsai H.-C."/>
            <person name="Liao T.-L."/>
            <person name="Liu Y.-M."/>
            <person name="Chen H.-J."/>
            <person name="Shen A.B.-T."/>
            <person name="Li J.-C."/>
            <person name="Su T.-L."/>
            <person name="Shao C.-P."/>
            <person name="Lee C.-T."/>
            <person name="Hor L.-I."/>
            <person name="Tsai S.-F."/>
        </authorList>
    </citation>
    <scope>NUCLEOTIDE SEQUENCE [LARGE SCALE GENOMIC DNA]</scope>
    <source>
        <strain>YJ016</strain>
    </source>
</reference>
<feature type="chain" id="PRO_0000107788" description="Nucleotide-binding protein VV0445">
    <location>
        <begin position="1"/>
        <end position="287"/>
    </location>
</feature>
<feature type="binding site" evidence="1">
    <location>
        <begin position="8"/>
        <end position="15"/>
    </location>
    <ligand>
        <name>ATP</name>
        <dbReference type="ChEBI" id="CHEBI:30616"/>
    </ligand>
</feature>
<feature type="binding site" evidence="1">
    <location>
        <begin position="56"/>
        <end position="59"/>
    </location>
    <ligand>
        <name>GTP</name>
        <dbReference type="ChEBI" id="CHEBI:37565"/>
    </ligand>
</feature>
<dbReference type="EMBL" id="BA000037">
    <property type="protein sequence ID" value="BAC93209.1"/>
    <property type="molecule type" value="Genomic_DNA"/>
</dbReference>
<dbReference type="SMR" id="Q7MPB9"/>
<dbReference type="STRING" id="672.VV93_v1c04130"/>
<dbReference type="KEGG" id="vvy:VV0445"/>
<dbReference type="eggNOG" id="COG1660">
    <property type="taxonomic scope" value="Bacteria"/>
</dbReference>
<dbReference type="HOGENOM" id="CLU_059558_1_1_6"/>
<dbReference type="Proteomes" id="UP000002675">
    <property type="component" value="Chromosome I"/>
</dbReference>
<dbReference type="GO" id="GO:0005524">
    <property type="term" value="F:ATP binding"/>
    <property type="evidence" value="ECO:0007669"/>
    <property type="project" value="UniProtKB-UniRule"/>
</dbReference>
<dbReference type="GO" id="GO:0005525">
    <property type="term" value="F:GTP binding"/>
    <property type="evidence" value="ECO:0007669"/>
    <property type="project" value="UniProtKB-UniRule"/>
</dbReference>
<dbReference type="HAMAP" id="MF_00636">
    <property type="entry name" value="RapZ_like"/>
    <property type="match status" value="1"/>
</dbReference>
<dbReference type="InterPro" id="IPR027417">
    <property type="entry name" value="P-loop_NTPase"/>
</dbReference>
<dbReference type="InterPro" id="IPR005337">
    <property type="entry name" value="RapZ-like"/>
</dbReference>
<dbReference type="InterPro" id="IPR053930">
    <property type="entry name" value="RapZ-like_N"/>
</dbReference>
<dbReference type="InterPro" id="IPR053931">
    <property type="entry name" value="RapZ_C"/>
</dbReference>
<dbReference type="NCBIfam" id="NF003828">
    <property type="entry name" value="PRK05416.1"/>
    <property type="match status" value="1"/>
</dbReference>
<dbReference type="PANTHER" id="PTHR30448">
    <property type="entry name" value="RNASE ADAPTER PROTEIN RAPZ"/>
    <property type="match status" value="1"/>
</dbReference>
<dbReference type="PANTHER" id="PTHR30448:SF0">
    <property type="entry name" value="RNASE ADAPTER PROTEIN RAPZ"/>
    <property type="match status" value="1"/>
</dbReference>
<dbReference type="Pfam" id="PF22740">
    <property type="entry name" value="PapZ_C"/>
    <property type="match status" value="1"/>
</dbReference>
<dbReference type="Pfam" id="PF03668">
    <property type="entry name" value="RapZ-like_N"/>
    <property type="match status" value="1"/>
</dbReference>
<dbReference type="PIRSF" id="PIRSF005052">
    <property type="entry name" value="P-loopkin"/>
    <property type="match status" value="1"/>
</dbReference>
<dbReference type="SUPFAM" id="SSF52540">
    <property type="entry name" value="P-loop containing nucleoside triphosphate hydrolases"/>
    <property type="match status" value="1"/>
</dbReference>
<sequence>MRLIVVSGHSGAGKSVALRVLEDMGYYCVDNLPVNLLESFIQSVSESKQNVAVSIDVRNIPKKLKELTTTLQKLKSSIDLSILFLDADKATLLKRYSETRRVHPLSLSDECHTLDQAIDLEKKMLKPLKEIADILLNSSNQSLHDLSEDVRYRIEGKERNKLIMVFESFGFKFGLPTDADYVFDVRFLPNPHWEPALRPMTGLDAPIKTFLESHDEVLELKRQIQTFIEHWLPLLEKNNRSYLTVAIGCTGGKHRSVYLTQQIGEYFAAMGHTVKIRHTTLEKRNKE</sequence>
<protein>
    <recommendedName>
        <fullName evidence="1">Nucleotide-binding protein VV0445</fullName>
    </recommendedName>
</protein>
<evidence type="ECO:0000255" key="1">
    <source>
        <dbReference type="HAMAP-Rule" id="MF_00636"/>
    </source>
</evidence>
<comment type="function">
    <text evidence="1">Displays ATPase and GTPase activities.</text>
</comment>
<comment type="similarity">
    <text evidence="1">Belongs to the RapZ-like family.</text>
</comment>
<organism>
    <name type="scientific">Vibrio vulnificus (strain YJ016)</name>
    <dbReference type="NCBI Taxonomy" id="196600"/>
    <lineage>
        <taxon>Bacteria</taxon>
        <taxon>Pseudomonadati</taxon>
        <taxon>Pseudomonadota</taxon>
        <taxon>Gammaproteobacteria</taxon>
        <taxon>Vibrionales</taxon>
        <taxon>Vibrionaceae</taxon>
        <taxon>Vibrio</taxon>
    </lineage>
</organism>
<accession>Q7MPB9</accession>